<dbReference type="EC" id="3.4.21.92" evidence="1"/>
<dbReference type="EMBL" id="AE017282">
    <property type="protein sequence ID" value="AAU93284.2"/>
    <property type="molecule type" value="Genomic_DNA"/>
</dbReference>
<dbReference type="SMR" id="Q60BE8"/>
<dbReference type="STRING" id="243233.MCA0529"/>
<dbReference type="MEROPS" id="S14.001"/>
<dbReference type="KEGG" id="mca:MCA0529"/>
<dbReference type="eggNOG" id="COG0740">
    <property type="taxonomic scope" value="Bacteria"/>
</dbReference>
<dbReference type="HOGENOM" id="CLU_058707_3_2_6"/>
<dbReference type="Proteomes" id="UP000006821">
    <property type="component" value="Chromosome"/>
</dbReference>
<dbReference type="GO" id="GO:0005737">
    <property type="term" value="C:cytoplasm"/>
    <property type="evidence" value="ECO:0007669"/>
    <property type="project" value="UniProtKB-SubCell"/>
</dbReference>
<dbReference type="GO" id="GO:0009368">
    <property type="term" value="C:endopeptidase Clp complex"/>
    <property type="evidence" value="ECO:0007669"/>
    <property type="project" value="TreeGrafter"/>
</dbReference>
<dbReference type="GO" id="GO:0004176">
    <property type="term" value="F:ATP-dependent peptidase activity"/>
    <property type="evidence" value="ECO:0007669"/>
    <property type="project" value="InterPro"/>
</dbReference>
<dbReference type="GO" id="GO:0051117">
    <property type="term" value="F:ATPase binding"/>
    <property type="evidence" value="ECO:0007669"/>
    <property type="project" value="TreeGrafter"/>
</dbReference>
<dbReference type="GO" id="GO:0004252">
    <property type="term" value="F:serine-type endopeptidase activity"/>
    <property type="evidence" value="ECO:0007669"/>
    <property type="project" value="UniProtKB-UniRule"/>
</dbReference>
<dbReference type="GO" id="GO:0006515">
    <property type="term" value="P:protein quality control for misfolded or incompletely synthesized proteins"/>
    <property type="evidence" value="ECO:0007669"/>
    <property type="project" value="TreeGrafter"/>
</dbReference>
<dbReference type="CDD" id="cd07017">
    <property type="entry name" value="S14_ClpP_2"/>
    <property type="match status" value="1"/>
</dbReference>
<dbReference type="FunFam" id="3.90.226.10:FF:000001">
    <property type="entry name" value="ATP-dependent Clp protease proteolytic subunit"/>
    <property type="match status" value="1"/>
</dbReference>
<dbReference type="Gene3D" id="3.90.226.10">
    <property type="entry name" value="2-enoyl-CoA Hydratase, Chain A, domain 1"/>
    <property type="match status" value="1"/>
</dbReference>
<dbReference type="HAMAP" id="MF_00444">
    <property type="entry name" value="ClpP"/>
    <property type="match status" value="1"/>
</dbReference>
<dbReference type="InterPro" id="IPR001907">
    <property type="entry name" value="ClpP"/>
</dbReference>
<dbReference type="InterPro" id="IPR029045">
    <property type="entry name" value="ClpP/crotonase-like_dom_sf"/>
</dbReference>
<dbReference type="InterPro" id="IPR023562">
    <property type="entry name" value="ClpP/TepA"/>
</dbReference>
<dbReference type="InterPro" id="IPR033135">
    <property type="entry name" value="ClpP_His_AS"/>
</dbReference>
<dbReference type="InterPro" id="IPR018215">
    <property type="entry name" value="ClpP_Ser_AS"/>
</dbReference>
<dbReference type="NCBIfam" id="TIGR00493">
    <property type="entry name" value="clpP"/>
    <property type="match status" value="1"/>
</dbReference>
<dbReference type="NCBIfam" id="NF001368">
    <property type="entry name" value="PRK00277.1"/>
    <property type="match status" value="1"/>
</dbReference>
<dbReference type="NCBIfam" id="NF009205">
    <property type="entry name" value="PRK12553.1"/>
    <property type="match status" value="1"/>
</dbReference>
<dbReference type="PANTHER" id="PTHR10381">
    <property type="entry name" value="ATP-DEPENDENT CLP PROTEASE PROTEOLYTIC SUBUNIT"/>
    <property type="match status" value="1"/>
</dbReference>
<dbReference type="PANTHER" id="PTHR10381:SF70">
    <property type="entry name" value="ATP-DEPENDENT CLP PROTEASE PROTEOLYTIC SUBUNIT"/>
    <property type="match status" value="1"/>
</dbReference>
<dbReference type="Pfam" id="PF00574">
    <property type="entry name" value="CLP_protease"/>
    <property type="match status" value="1"/>
</dbReference>
<dbReference type="PRINTS" id="PR00127">
    <property type="entry name" value="CLPPROTEASEP"/>
</dbReference>
<dbReference type="SUPFAM" id="SSF52096">
    <property type="entry name" value="ClpP/crotonase"/>
    <property type="match status" value="1"/>
</dbReference>
<dbReference type="PROSITE" id="PS00382">
    <property type="entry name" value="CLP_PROTEASE_HIS"/>
    <property type="match status" value="1"/>
</dbReference>
<dbReference type="PROSITE" id="PS00381">
    <property type="entry name" value="CLP_PROTEASE_SER"/>
    <property type="match status" value="1"/>
</dbReference>
<protein>
    <recommendedName>
        <fullName evidence="1">ATP-dependent Clp protease proteolytic subunit 2</fullName>
        <ecNumber evidence="1">3.4.21.92</ecNumber>
    </recommendedName>
    <alternativeName>
        <fullName evidence="1">Endopeptidase Clp 2</fullName>
    </alternativeName>
</protein>
<sequence>MPIVIEQSARGERAFDIYSRLLKERVIFLVGQVEDYMANLVIAQLLFLESENPDKDIHLYINSPGGLVTAGLAIYDTMQFIKPDVSTLCVGQAASMGALLLAGGAAGKRYCLPHSRIMIHQPLGGFQGQASDIDIHAREILAVRDRLNKILAHHTGQPIEKIQIDTDRDNFMGGDDAVSYGLIDKVLTHRTVTAA</sequence>
<gene>
    <name evidence="1" type="primary">clpP2</name>
    <name type="ordered locus">MCA0529</name>
</gene>
<organism>
    <name type="scientific">Methylococcus capsulatus (strain ATCC 33009 / NCIMB 11132 / Bath)</name>
    <dbReference type="NCBI Taxonomy" id="243233"/>
    <lineage>
        <taxon>Bacteria</taxon>
        <taxon>Pseudomonadati</taxon>
        <taxon>Pseudomonadota</taxon>
        <taxon>Gammaproteobacteria</taxon>
        <taxon>Methylococcales</taxon>
        <taxon>Methylococcaceae</taxon>
        <taxon>Methylococcus</taxon>
    </lineage>
</organism>
<keyword id="KW-0963">Cytoplasm</keyword>
<keyword id="KW-0378">Hydrolase</keyword>
<keyword id="KW-0645">Protease</keyword>
<keyword id="KW-1185">Reference proteome</keyword>
<keyword id="KW-0720">Serine protease</keyword>
<proteinExistence type="inferred from homology"/>
<comment type="function">
    <text evidence="1">Cleaves peptides in various proteins in a process that requires ATP hydrolysis. Has a chymotrypsin-like activity. Plays a major role in the degradation of misfolded proteins.</text>
</comment>
<comment type="catalytic activity">
    <reaction evidence="1">
        <text>Hydrolysis of proteins to small peptides in the presence of ATP and magnesium. alpha-casein is the usual test substrate. In the absence of ATP, only oligopeptides shorter than five residues are hydrolyzed (such as succinyl-Leu-Tyr-|-NHMec, and Leu-Tyr-Leu-|-Tyr-Trp, in which cleavage of the -Tyr-|-Leu- and -Tyr-|-Trp bonds also occurs).</text>
        <dbReference type="EC" id="3.4.21.92"/>
    </reaction>
</comment>
<comment type="subunit">
    <text evidence="1">Fourteen ClpP subunits assemble into 2 heptameric rings which stack back to back to give a disk-like structure with a central cavity, resembling the structure of eukaryotic proteasomes.</text>
</comment>
<comment type="subcellular location">
    <subcellularLocation>
        <location evidence="1">Cytoplasm</location>
    </subcellularLocation>
</comment>
<comment type="similarity">
    <text evidence="1">Belongs to the peptidase S14 family.</text>
</comment>
<accession>Q60BE8</accession>
<reference key="1">
    <citation type="journal article" date="2004" name="PLoS Biol.">
        <title>Genomic insights into methanotrophy: the complete genome sequence of Methylococcus capsulatus (Bath).</title>
        <authorList>
            <person name="Ward N.L."/>
            <person name="Larsen O."/>
            <person name="Sakwa J."/>
            <person name="Bruseth L."/>
            <person name="Khouri H.M."/>
            <person name="Durkin A.S."/>
            <person name="Dimitrov G."/>
            <person name="Jiang L."/>
            <person name="Scanlan D."/>
            <person name="Kang K.H."/>
            <person name="Lewis M.R."/>
            <person name="Nelson K.E."/>
            <person name="Methe B.A."/>
            <person name="Wu M."/>
            <person name="Heidelberg J.F."/>
            <person name="Paulsen I.T."/>
            <person name="Fouts D.E."/>
            <person name="Ravel J."/>
            <person name="Tettelin H."/>
            <person name="Ren Q."/>
            <person name="Read T.D."/>
            <person name="DeBoy R.T."/>
            <person name="Seshadri R."/>
            <person name="Salzberg S.L."/>
            <person name="Jensen H.B."/>
            <person name="Birkeland N.K."/>
            <person name="Nelson W.C."/>
            <person name="Dodson R.J."/>
            <person name="Grindhaug S.H."/>
            <person name="Holt I.E."/>
            <person name="Eidhammer I."/>
            <person name="Jonasen I."/>
            <person name="Vanaken S."/>
            <person name="Utterback T.R."/>
            <person name="Feldblyum T.V."/>
            <person name="Fraser C.M."/>
            <person name="Lillehaug J.R."/>
            <person name="Eisen J.A."/>
        </authorList>
    </citation>
    <scope>NUCLEOTIDE SEQUENCE [LARGE SCALE GENOMIC DNA]</scope>
    <source>
        <strain>ATCC 33009 / NCIMB 11132 / Bath</strain>
    </source>
</reference>
<evidence type="ECO:0000255" key="1">
    <source>
        <dbReference type="HAMAP-Rule" id="MF_00444"/>
    </source>
</evidence>
<feature type="chain" id="PRO_0000179589" description="ATP-dependent Clp protease proteolytic subunit 2">
    <location>
        <begin position="1"/>
        <end position="195"/>
    </location>
</feature>
<feature type="active site" description="Nucleophile" evidence="1">
    <location>
        <position position="95"/>
    </location>
</feature>
<feature type="active site" evidence="1">
    <location>
        <position position="120"/>
    </location>
</feature>
<name>CLPP2_METCA</name>